<accession>P61807</accession>
<accession>O88369</accession>
<evidence type="ECO:0000250" key="1"/>
<evidence type="ECO:0000250" key="2">
    <source>
        <dbReference type="UniProtKB" id="O75324"/>
    </source>
</evidence>
<evidence type="ECO:0000255" key="3"/>
<evidence type="ECO:0000269" key="4">
    <source>
    </source>
</evidence>
<evidence type="ECO:0000305" key="5"/>
<evidence type="ECO:0007744" key="6">
    <source>
    </source>
</evidence>
<evidence type="ECO:0007744" key="7">
    <source>
    </source>
</evidence>
<feature type="chain" id="PRO_0000072015" description="Stannin">
    <location>
        <begin position="1"/>
        <end position="88"/>
    </location>
</feature>
<feature type="topological domain" description="Mitochondrial intermembrane" evidence="1">
    <location>
        <begin position="1"/>
        <end position="10"/>
    </location>
</feature>
<feature type="transmembrane region" description="Helical" evidence="3">
    <location>
        <begin position="11"/>
        <end position="31"/>
    </location>
</feature>
<feature type="topological domain" description="Cytoplasmic" evidence="1">
    <location>
        <begin position="32"/>
        <end position="88"/>
    </location>
</feature>
<feature type="modified residue" description="Phosphoserine" evidence="6">
    <location>
        <position position="49"/>
    </location>
</feature>
<feature type="modified residue" description="Phosphoserine" evidence="6 7">
    <location>
        <position position="83"/>
    </location>
</feature>
<organism>
    <name type="scientific">Mus musculus</name>
    <name type="common">Mouse</name>
    <dbReference type="NCBI Taxonomy" id="10090"/>
    <lineage>
        <taxon>Eukaryota</taxon>
        <taxon>Metazoa</taxon>
        <taxon>Chordata</taxon>
        <taxon>Craniata</taxon>
        <taxon>Vertebrata</taxon>
        <taxon>Euteleostomi</taxon>
        <taxon>Mammalia</taxon>
        <taxon>Eutheria</taxon>
        <taxon>Euarchontoglires</taxon>
        <taxon>Glires</taxon>
        <taxon>Rodentia</taxon>
        <taxon>Myomorpha</taxon>
        <taxon>Muroidea</taxon>
        <taxon>Muridae</taxon>
        <taxon>Murinae</taxon>
        <taxon>Mus</taxon>
        <taxon>Mus</taxon>
    </lineage>
</organism>
<comment type="function">
    <text evidence="2 4">Plays a role in the toxic effects of organotins (By similarity). Plays a role in endosomal maturation (PubMed:27015288).</text>
</comment>
<comment type="subunit">
    <text evidence="2">Monomer.</text>
</comment>
<comment type="subcellular location">
    <subcellularLocation>
        <location evidence="1">Mitochondrion outer membrane</location>
        <topology evidence="1">Single-pass membrane protein</topology>
    </subcellularLocation>
</comment>
<comment type="similarity">
    <text evidence="5">Belongs to the stannin family.</text>
</comment>
<name>SNN_MOUSE</name>
<keyword id="KW-0472">Membrane</keyword>
<keyword id="KW-0496">Mitochondrion</keyword>
<keyword id="KW-1000">Mitochondrion outer membrane</keyword>
<keyword id="KW-0597">Phosphoprotein</keyword>
<keyword id="KW-1185">Reference proteome</keyword>
<keyword id="KW-0812">Transmembrane</keyword>
<keyword id="KW-1133">Transmembrane helix</keyword>
<dbReference type="EMBL" id="AF030522">
    <property type="protein sequence ID" value="AAC28428.1"/>
    <property type="molecule type" value="Genomic_DNA"/>
</dbReference>
<dbReference type="EMBL" id="BC017685">
    <property type="protein sequence ID" value="AAH17685.1"/>
    <property type="molecule type" value="mRNA"/>
</dbReference>
<dbReference type="EMBL" id="BC063027">
    <property type="protein sequence ID" value="AAH63027.1"/>
    <property type="molecule type" value="mRNA"/>
</dbReference>
<dbReference type="CCDS" id="CCDS37255.1"/>
<dbReference type="RefSeq" id="NP_033249.1">
    <property type="nucleotide sequence ID" value="NM_009223.3"/>
</dbReference>
<dbReference type="RefSeq" id="XP_006521943.1">
    <property type="nucleotide sequence ID" value="XM_006521880.1"/>
</dbReference>
<dbReference type="BMRB" id="P61807"/>
<dbReference type="SMR" id="P61807"/>
<dbReference type="FunCoup" id="P61807">
    <property type="interactions" value="637"/>
</dbReference>
<dbReference type="IntAct" id="P61807">
    <property type="interactions" value="2"/>
</dbReference>
<dbReference type="MINT" id="P61807"/>
<dbReference type="STRING" id="10090.ENSMUSP00000086405"/>
<dbReference type="iPTMnet" id="P61807"/>
<dbReference type="PhosphoSitePlus" id="P61807"/>
<dbReference type="SwissPalm" id="P61807"/>
<dbReference type="PaxDb" id="10090-ENSMUSP00000086405"/>
<dbReference type="ProteomicsDB" id="261387"/>
<dbReference type="Pumba" id="P61807"/>
<dbReference type="Antibodypedia" id="2691">
    <property type="antibodies" value="10 antibodies from 8 providers"/>
</dbReference>
<dbReference type="Ensembl" id="ENSMUST00000089011.6">
    <property type="protein sequence ID" value="ENSMUSP00000086405.5"/>
    <property type="gene ID" value="ENSMUSG00000037972.8"/>
</dbReference>
<dbReference type="Ensembl" id="ENSMUST00000228962.2">
    <property type="protein sequence ID" value="ENSMUSP00000154936.2"/>
    <property type="gene ID" value="ENSMUSG00000037972.8"/>
</dbReference>
<dbReference type="GeneID" id="20621"/>
<dbReference type="KEGG" id="mmu:20621"/>
<dbReference type="UCSC" id="uc007yeq.3">
    <property type="organism name" value="mouse"/>
</dbReference>
<dbReference type="AGR" id="MGI:1276549"/>
<dbReference type="CTD" id="8303"/>
<dbReference type="MGI" id="MGI:1276549">
    <property type="gene designation" value="Snn"/>
</dbReference>
<dbReference type="VEuPathDB" id="HostDB:ENSMUSG00000037972"/>
<dbReference type="eggNOG" id="ENOG502S14Z">
    <property type="taxonomic scope" value="Eukaryota"/>
</dbReference>
<dbReference type="GeneTree" id="ENSGT00390000009447"/>
<dbReference type="HOGENOM" id="CLU_2711160_0_0_1"/>
<dbReference type="InParanoid" id="P61807"/>
<dbReference type="OMA" id="PCMERKA"/>
<dbReference type="OrthoDB" id="9448252at2759"/>
<dbReference type="PhylomeDB" id="P61807"/>
<dbReference type="TreeFam" id="TF336244"/>
<dbReference type="BioGRID-ORCS" id="20621">
    <property type="hits" value="0 hits in 76 CRISPR screens"/>
</dbReference>
<dbReference type="ChiTaRS" id="Snn">
    <property type="organism name" value="mouse"/>
</dbReference>
<dbReference type="PRO" id="PR:P61807"/>
<dbReference type="Proteomes" id="UP000000589">
    <property type="component" value="Chromosome 16"/>
</dbReference>
<dbReference type="RNAct" id="P61807">
    <property type="molecule type" value="protein"/>
</dbReference>
<dbReference type="Bgee" id="ENSMUSG00000037972">
    <property type="expression patterns" value="Expressed in cortical plate and 216 other cell types or tissues"/>
</dbReference>
<dbReference type="ExpressionAtlas" id="P61807">
    <property type="expression patterns" value="baseline and differential"/>
</dbReference>
<dbReference type="GO" id="GO:0005741">
    <property type="term" value="C:mitochondrial outer membrane"/>
    <property type="evidence" value="ECO:0007669"/>
    <property type="project" value="UniProtKB-SubCell"/>
</dbReference>
<dbReference type="GO" id="GO:0046872">
    <property type="term" value="F:metal ion binding"/>
    <property type="evidence" value="ECO:0007669"/>
    <property type="project" value="Ensembl"/>
</dbReference>
<dbReference type="CDD" id="cd20257">
    <property type="entry name" value="Stannin"/>
    <property type="match status" value="1"/>
</dbReference>
<dbReference type="FunFam" id="4.10.280.20:FF:000001">
    <property type="entry name" value="stannin"/>
    <property type="match status" value="1"/>
</dbReference>
<dbReference type="Gene3D" id="4.10.280.20">
    <property type="entry name" value="membrane protein stannin"/>
    <property type="match status" value="1"/>
</dbReference>
<dbReference type="InterPro" id="IPR015137">
    <property type="entry name" value="SNN_cytoplasm"/>
</dbReference>
<dbReference type="InterPro" id="IPR015136">
    <property type="entry name" value="SNN_linker"/>
</dbReference>
<dbReference type="InterPro" id="IPR015135">
    <property type="entry name" value="SNN_transmemb"/>
</dbReference>
<dbReference type="InterPro" id="IPR038747">
    <property type="entry name" value="Stannin"/>
</dbReference>
<dbReference type="InterPro" id="IPR027435">
    <property type="entry name" value="Stannin_sf"/>
</dbReference>
<dbReference type="PANTHER" id="PTHR28564">
    <property type="entry name" value="STANNIN"/>
    <property type="match status" value="1"/>
</dbReference>
<dbReference type="PANTHER" id="PTHR28564:SF1">
    <property type="entry name" value="STANNIN"/>
    <property type="match status" value="1"/>
</dbReference>
<dbReference type="Pfam" id="PF09051">
    <property type="entry name" value="SNN_cytoplasm"/>
    <property type="match status" value="1"/>
</dbReference>
<dbReference type="Pfam" id="PF09050">
    <property type="entry name" value="SNN_linker"/>
    <property type="match status" value="1"/>
</dbReference>
<dbReference type="Pfam" id="PF09049">
    <property type="entry name" value="SNN_transmemb"/>
    <property type="match status" value="1"/>
</dbReference>
<gene>
    <name type="primary">Snn</name>
</gene>
<proteinExistence type="evidence at protein level"/>
<reference key="1">
    <citation type="journal article" date="1998" name="Mamm. Genome">
        <title>Chromosomal localization and characterization of the stannin (Snn) gene.</title>
        <authorList>
            <person name="Dejneka N.S."/>
            <person name="Polavarapu R."/>
            <person name="Deng X."/>
            <person name="Martin-Deleon P.A."/>
            <person name="Billingsley M.L."/>
        </authorList>
    </citation>
    <scope>NUCLEOTIDE SEQUENCE [GENOMIC DNA]</scope>
</reference>
<reference key="2">
    <citation type="journal article" date="2004" name="Genome Res.">
        <title>The status, quality, and expansion of the NIH full-length cDNA project: the Mammalian Gene Collection (MGC).</title>
        <authorList>
            <consortium name="The MGC Project Team"/>
        </authorList>
    </citation>
    <scope>NUCLEOTIDE SEQUENCE [LARGE SCALE MRNA]</scope>
    <source>
        <strain>FVB/N</strain>
        <tissue>Kidney</tissue>
        <tissue>Mammary tumor</tissue>
    </source>
</reference>
<reference key="3">
    <citation type="journal article" date="2004" name="Mol. Cell. Proteomics">
        <title>Phosphoproteomic analysis of the developing mouse brain.</title>
        <authorList>
            <person name="Ballif B.A."/>
            <person name="Villen J."/>
            <person name="Beausoleil S.A."/>
            <person name="Schwartz D."/>
            <person name="Gygi S.P."/>
        </authorList>
    </citation>
    <scope>PHOSPHORYLATION [LARGE SCALE ANALYSIS] AT SER-49 AND SER-83</scope>
    <scope>IDENTIFICATION BY MASS SPECTROMETRY [LARGE SCALE ANALYSIS]</scope>
    <source>
        <tissue>Embryonic brain</tissue>
    </source>
</reference>
<reference key="4">
    <citation type="journal article" date="2010" name="Cell">
        <title>A tissue-specific atlas of mouse protein phosphorylation and expression.</title>
        <authorList>
            <person name="Huttlin E.L."/>
            <person name="Jedrychowski M.P."/>
            <person name="Elias J.E."/>
            <person name="Goswami T."/>
            <person name="Rad R."/>
            <person name="Beausoleil S.A."/>
            <person name="Villen J."/>
            <person name="Haas W."/>
            <person name="Sowa M.E."/>
            <person name="Gygi S.P."/>
        </authorList>
    </citation>
    <scope>PHOSPHORYLATION [LARGE SCALE ANALYSIS] AT SER-83</scope>
    <scope>IDENTIFICATION BY MASS SPECTROMETRY [LARGE SCALE ANALYSIS]</scope>
    <source>
        <tissue>Brain</tissue>
    </source>
</reference>
<reference key="5">
    <citation type="journal article" date="2016" name="PLoS Biol.">
        <title>Hemotin, a regulator of phagocytosis encoded by a small ORF and conserved across metazoans.</title>
        <authorList>
            <person name="Pueyo J.I."/>
            <person name="Magny E.G."/>
            <person name="Sampson C.J."/>
            <person name="Amin U."/>
            <person name="Evans I.R."/>
            <person name="Bishop S.A."/>
            <person name="Couso J.P."/>
        </authorList>
    </citation>
    <scope>FUNCTION</scope>
</reference>
<protein>
    <recommendedName>
        <fullName>Stannin</fullName>
    </recommendedName>
</protein>
<sequence length="88" mass="9501">MSIMDHSPTTGVVTVIVILIAIAALGALILGCWCYLRLQRISQSEDEESIVGDGETKEPFLLVQYSAKGPCVERKAKLMTANSPEVHG</sequence>